<accession>Q6UDG9</accession>
<dbReference type="EC" id="3.6.4.-" evidence="1"/>
<dbReference type="EMBL" id="AY372243">
    <property type="protein sequence ID" value="AAQ73741.1"/>
    <property type="molecule type" value="Genomic_DNA"/>
</dbReference>
<dbReference type="RefSeq" id="NP_944435.1">
    <property type="nucleotide sequence ID" value="NC_005264.1"/>
</dbReference>
<dbReference type="GeneID" id="2656955"/>
<dbReference type="KEGG" id="vg:2656955"/>
<dbReference type="Proteomes" id="UP000006840">
    <property type="component" value="Segment"/>
</dbReference>
<dbReference type="GO" id="GO:0042025">
    <property type="term" value="C:host cell nucleus"/>
    <property type="evidence" value="ECO:0007669"/>
    <property type="project" value="UniProtKB-SubCell"/>
</dbReference>
<dbReference type="GO" id="GO:0005524">
    <property type="term" value="F:ATP binding"/>
    <property type="evidence" value="ECO:0007669"/>
    <property type="project" value="UniProtKB-KW"/>
</dbReference>
<dbReference type="GO" id="GO:0004386">
    <property type="term" value="F:helicase activity"/>
    <property type="evidence" value="ECO:0007669"/>
    <property type="project" value="UniProtKB-KW"/>
</dbReference>
<dbReference type="GO" id="GO:0016787">
    <property type="term" value="F:hydrolase activity"/>
    <property type="evidence" value="ECO:0007669"/>
    <property type="project" value="UniProtKB-KW"/>
</dbReference>
<dbReference type="GO" id="GO:0006260">
    <property type="term" value="P:DNA replication"/>
    <property type="evidence" value="ECO:0007669"/>
    <property type="project" value="UniProtKB-KW"/>
</dbReference>
<dbReference type="Gene3D" id="3.40.50.300">
    <property type="entry name" value="P-loop containing nucleotide triphosphate hydrolases"/>
    <property type="match status" value="1"/>
</dbReference>
<dbReference type="HAMAP" id="MF_04030">
    <property type="entry name" value="HSV_HELI"/>
    <property type="match status" value="1"/>
</dbReference>
<dbReference type="InterPro" id="IPR003840">
    <property type="entry name" value="DNA_helicase_dom"/>
</dbReference>
<dbReference type="InterPro" id="IPR034711">
    <property type="entry name" value="HSV_HELI"/>
</dbReference>
<dbReference type="InterPro" id="IPR027417">
    <property type="entry name" value="P-loop_NTPase"/>
</dbReference>
<dbReference type="Pfam" id="PF02689">
    <property type="entry name" value="Herpes_Helicase"/>
    <property type="match status" value="1"/>
</dbReference>
<dbReference type="SUPFAM" id="SSF52540">
    <property type="entry name" value="P-loop containing nucleoside triphosphate hydrolases"/>
    <property type="match status" value="2"/>
</dbReference>
<reference key="1">
    <citation type="journal article" date="2006" name="J. Virol.">
        <title>Psittacid herpesvirus 1 and infectious laryngotracheitis virus: Comparative genome sequence analysis of two avian alphaherpesviruses.</title>
        <authorList>
            <person name="Thureen D.R."/>
            <person name="Keeler C.L. Jr."/>
        </authorList>
    </citation>
    <scope>NUCLEOTIDE SEQUENCE [LARGE SCALE GENOMIC DNA]</scope>
</reference>
<evidence type="ECO:0000255" key="1">
    <source>
        <dbReference type="HAMAP-Rule" id="MF_04030"/>
    </source>
</evidence>
<organismHost>
    <name type="scientific">Amazona oratrix</name>
    <name type="common">yellow-headed parrot</name>
    <dbReference type="NCBI Taxonomy" id="152276"/>
</organismHost>
<proteinExistence type="inferred from homology"/>
<comment type="function">
    <text evidence="1">Component of the helicase/primase complex. Unwinds the DNA at the replication forks and generates single-stranded DNA for both leading and lagging strand synthesis. The primase synthesizes short RNA primers on the lagging strand that the polymerase elongates using dNTPs. Possesses helicase-like motifs and therefore may act as the helicase subunit of the complex.</text>
</comment>
<comment type="subunit">
    <text evidence="1">Associates with the primase and the primase-associated factor to form the helicase-primase complex.</text>
</comment>
<comment type="subcellular location">
    <subcellularLocation>
        <location evidence="1">Host nucleus</location>
    </subcellularLocation>
</comment>
<comment type="similarity">
    <text evidence="1">Belongs to the herpesviridae helicase family.</text>
</comment>
<sequence>MAEDRGTRLWQFPDHVYLNFTAMHGIQHVVDRISSLAEESVTPAERPPLSWFEAVARADSPDEVPPRELPFRVYLITGNAGSGKSTCIQALTEMLNCVTTGSTRVAALNVFTKLSSAYTSPAIQTIFHDFGFKGSHVQAVLGKFKYPKQPDPKSLVDAQMSDLYYYWDVLKDIANKVVEGGLPETMRVLLSLELKSGKPFTDAAPFLSAATPALIRSNVVLIDEAGVLGKHILTAVVFSWWLHNALWQTRRYAEGKVPVIVCIGSPTQTDAMESVFEHSTLRHLVSNKTNILSHLIRSSEMAERMNLNRNWTIFINNKRCTEQDFGNVLKAFEFGLPMNEGHARFLDQFVVSESYIKDPSKLPGWTRLFASHDDVKVYMSRLHANLRARRSDKFKVFVLPIYTVVSLEAFDKYKELTGQTSLTMEKWLTANASRLGNYSQSRDLDVTTPRFEYGTADGKKFALITTDASHVLNSQISVTKRVKKLVFGFEGSFGDFAAVLSEDTFFKKHGEDHVEFAYRFIAALLFSGMIAFYDFLRTEGLPQDKVDAAYSRLQAVTADLLAATHEQLGIAAAAGAQTGSGARRSRNADAFAFDDDASEEVTDAELDDLFGAMTDNSMDAFYLNYEKLPADAHGQEIFFHFDMLKRLFSERYDALSGLFGKTFTSAPFRTFVGQASFNGSNAFVSSFSGGILSFTSQTDAYTLRGVTRAPVPCFVDELFRGRDWAAAILRETDMPRVVVSDSMGFVSVINHNMSTFVDNVSGEELQMAATVDHGISSNLAMTITRSQGLGLDRVAICFATSQLKLNTAYVAMSRVTSCRYLRMNVNPLRTHYEDTRRVSAHILAALRCKDVKLVY</sequence>
<feature type="chain" id="PRO_0000406834" description="DNA replication helicase">
    <location>
        <begin position="1"/>
        <end position="855"/>
    </location>
</feature>
<feature type="binding site" evidence="1">
    <location>
        <begin position="78"/>
        <end position="85"/>
    </location>
    <ligand>
        <name>ATP</name>
        <dbReference type="ChEBI" id="CHEBI:30616"/>
    </ligand>
</feature>
<protein>
    <recommendedName>
        <fullName evidence="1">DNA replication helicase</fullName>
        <ecNumber evidence="1">3.6.4.-</ecNumber>
    </recommendedName>
</protein>
<name>HELI_PSHV1</name>
<gene>
    <name evidence="1" type="primary">HELI</name>
    <name type="ordered locus">UL5</name>
</gene>
<keyword id="KW-0067">ATP-binding</keyword>
<keyword id="KW-0235">DNA replication</keyword>
<keyword id="KW-0347">Helicase</keyword>
<keyword id="KW-1048">Host nucleus</keyword>
<keyword id="KW-0378">Hydrolase</keyword>
<keyword id="KW-0547">Nucleotide-binding</keyword>
<keyword id="KW-1185">Reference proteome</keyword>
<organism>
    <name type="scientific">Psittacid herpesvirus 1 (isolate Amazon parrot/-/97-0001/1997)</name>
    <name type="common">PsHV-1</name>
    <name type="synonym">Pacheco's disease virus</name>
    <dbReference type="NCBI Taxonomy" id="670426"/>
    <lineage>
        <taxon>Viruses</taxon>
        <taxon>Duplodnaviria</taxon>
        <taxon>Heunggongvirae</taxon>
        <taxon>Peploviricota</taxon>
        <taxon>Herviviricetes</taxon>
        <taxon>Herpesvirales</taxon>
        <taxon>Orthoherpesviridae</taxon>
        <taxon>Alphaherpesvirinae</taxon>
        <taxon>Iltovirus</taxon>
        <taxon>Iltovirus psittacidalpha1</taxon>
        <taxon>Psittacid alphaherpesvirus 1</taxon>
    </lineage>
</organism>